<accession>Q2JLQ2</accession>
<feature type="chain" id="PRO_1000090000" description="Acetate kinase">
    <location>
        <begin position="1"/>
        <end position="403"/>
    </location>
</feature>
<feature type="active site" description="Proton donor/acceptor" evidence="1">
    <location>
        <position position="154"/>
    </location>
</feature>
<feature type="binding site" evidence="1">
    <location>
        <position position="7"/>
    </location>
    <ligand>
        <name>Mg(2+)</name>
        <dbReference type="ChEBI" id="CHEBI:18420"/>
    </ligand>
</feature>
<feature type="binding site" evidence="1">
    <location>
        <position position="14"/>
    </location>
    <ligand>
        <name>ATP</name>
        <dbReference type="ChEBI" id="CHEBI:30616"/>
    </ligand>
</feature>
<feature type="binding site" evidence="1">
    <location>
        <position position="97"/>
    </location>
    <ligand>
        <name>substrate</name>
    </ligand>
</feature>
<feature type="binding site" evidence="1">
    <location>
        <begin position="213"/>
        <end position="217"/>
    </location>
    <ligand>
        <name>ATP</name>
        <dbReference type="ChEBI" id="CHEBI:30616"/>
    </ligand>
</feature>
<feature type="binding site" evidence="1">
    <location>
        <begin position="287"/>
        <end position="289"/>
    </location>
    <ligand>
        <name>ATP</name>
        <dbReference type="ChEBI" id="CHEBI:30616"/>
    </ligand>
</feature>
<feature type="binding site" evidence="1">
    <location>
        <begin position="335"/>
        <end position="339"/>
    </location>
    <ligand>
        <name>ATP</name>
        <dbReference type="ChEBI" id="CHEBI:30616"/>
    </ligand>
</feature>
<feature type="binding site" evidence="1">
    <location>
        <position position="388"/>
    </location>
    <ligand>
        <name>Mg(2+)</name>
        <dbReference type="ChEBI" id="CHEBI:18420"/>
    </ligand>
</feature>
<feature type="site" description="Transition state stabilizer" evidence="1">
    <location>
        <position position="185"/>
    </location>
</feature>
<feature type="site" description="Transition state stabilizer" evidence="1">
    <location>
        <position position="246"/>
    </location>
</feature>
<dbReference type="EC" id="2.7.2.1" evidence="1"/>
<dbReference type="EMBL" id="CP000240">
    <property type="protein sequence ID" value="ABD02352.1"/>
    <property type="molecule type" value="Genomic_DNA"/>
</dbReference>
<dbReference type="RefSeq" id="WP_011433002.1">
    <property type="nucleotide sequence ID" value="NC_007776.1"/>
</dbReference>
<dbReference type="SMR" id="Q2JLQ2"/>
<dbReference type="STRING" id="321332.CYB_1384"/>
<dbReference type="KEGG" id="cyb:CYB_1384"/>
<dbReference type="eggNOG" id="COG0282">
    <property type="taxonomic scope" value="Bacteria"/>
</dbReference>
<dbReference type="HOGENOM" id="CLU_020352_0_1_3"/>
<dbReference type="OrthoDB" id="9802453at2"/>
<dbReference type="UniPathway" id="UPA00340">
    <property type="reaction ID" value="UER00458"/>
</dbReference>
<dbReference type="Proteomes" id="UP000001938">
    <property type="component" value="Chromosome"/>
</dbReference>
<dbReference type="GO" id="GO:0005737">
    <property type="term" value="C:cytoplasm"/>
    <property type="evidence" value="ECO:0007669"/>
    <property type="project" value="UniProtKB-SubCell"/>
</dbReference>
<dbReference type="GO" id="GO:0008776">
    <property type="term" value="F:acetate kinase activity"/>
    <property type="evidence" value="ECO:0007669"/>
    <property type="project" value="UniProtKB-UniRule"/>
</dbReference>
<dbReference type="GO" id="GO:0005524">
    <property type="term" value="F:ATP binding"/>
    <property type="evidence" value="ECO:0007669"/>
    <property type="project" value="UniProtKB-KW"/>
</dbReference>
<dbReference type="GO" id="GO:0000287">
    <property type="term" value="F:magnesium ion binding"/>
    <property type="evidence" value="ECO:0007669"/>
    <property type="project" value="UniProtKB-UniRule"/>
</dbReference>
<dbReference type="GO" id="GO:0006083">
    <property type="term" value="P:acetate metabolic process"/>
    <property type="evidence" value="ECO:0007669"/>
    <property type="project" value="TreeGrafter"/>
</dbReference>
<dbReference type="GO" id="GO:0006085">
    <property type="term" value="P:acetyl-CoA biosynthetic process"/>
    <property type="evidence" value="ECO:0007669"/>
    <property type="project" value="UniProtKB-UniRule"/>
</dbReference>
<dbReference type="CDD" id="cd24010">
    <property type="entry name" value="ASKHA_NBD_AcK_PK"/>
    <property type="match status" value="1"/>
</dbReference>
<dbReference type="Gene3D" id="3.30.420.40">
    <property type="match status" value="2"/>
</dbReference>
<dbReference type="HAMAP" id="MF_00020">
    <property type="entry name" value="Acetate_kinase"/>
    <property type="match status" value="1"/>
</dbReference>
<dbReference type="InterPro" id="IPR004372">
    <property type="entry name" value="Ac/propionate_kinase"/>
</dbReference>
<dbReference type="InterPro" id="IPR000890">
    <property type="entry name" value="Aliphatic_acid_kin_short-chain"/>
</dbReference>
<dbReference type="InterPro" id="IPR023865">
    <property type="entry name" value="Aliphatic_acid_kinase_CS"/>
</dbReference>
<dbReference type="InterPro" id="IPR043129">
    <property type="entry name" value="ATPase_NBD"/>
</dbReference>
<dbReference type="NCBIfam" id="TIGR00016">
    <property type="entry name" value="ackA"/>
    <property type="match status" value="1"/>
</dbReference>
<dbReference type="PANTHER" id="PTHR21060">
    <property type="entry name" value="ACETATE KINASE"/>
    <property type="match status" value="1"/>
</dbReference>
<dbReference type="PANTHER" id="PTHR21060:SF15">
    <property type="entry name" value="ACETATE KINASE-RELATED"/>
    <property type="match status" value="1"/>
</dbReference>
<dbReference type="Pfam" id="PF00871">
    <property type="entry name" value="Acetate_kinase"/>
    <property type="match status" value="1"/>
</dbReference>
<dbReference type="PIRSF" id="PIRSF000722">
    <property type="entry name" value="Acetate_prop_kin"/>
    <property type="match status" value="1"/>
</dbReference>
<dbReference type="PRINTS" id="PR00471">
    <property type="entry name" value="ACETATEKNASE"/>
</dbReference>
<dbReference type="SUPFAM" id="SSF53067">
    <property type="entry name" value="Actin-like ATPase domain"/>
    <property type="match status" value="2"/>
</dbReference>
<dbReference type="PROSITE" id="PS01075">
    <property type="entry name" value="ACETATE_KINASE_1"/>
    <property type="match status" value="1"/>
</dbReference>
<dbReference type="PROSITE" id="PS01076">
    <property type="entry name" value="ACETATE_KINASE_2"/>
    <property type="match status" value="1"/>
</dbReference>
<gene>
    <name evidence="1" type="primary">ackA</name>
    <name type="ordered locus">CYB_1384</name>
</gene>
<protein>
    <recommendedName>
        <fullName evidence="1">Acetate kinase</fullName>
        <ecNumber evidence="1">2.7.2.1</ecNumber>
    </recommendedName>
    <alternativeName>
        <fullName evidence="1">Acetokinase</fullName>
    </alternativeName>
</protein>
<evidence type="ECO:0000255" key="1">
    <source>
        <dbReference type="HAMAP-Rule" id="MF_00020"/>
    </source>
</evidence>
<reference key="1">
    <citation type="journal article" date="2007" name="ISME J.">
        <title>Population level functional diversity in a microbial community revealed by comparative genomic and metagenomic analyses.</title>
        <authorList>
            <person name="Bhaya D."/>
            <person name="Grossman A.R."/>
            <person name="Steunou A.-S."/>
            <person name="Khuri N."/>
            <person name="Cohan F.M."/>
            <person name="Hamamura N."/>
            <person name="Melendrez M.C."/>
            <person name="Bateson M.M."/>
            <person name="Ward D.M."/>
            <person name="Heidelberg J.F."/>
        </authorList>
    </citation>
    <scope>NUCLEOTIDE SEQUENCE [LARGE SCALE GENOMIC DNA]</scope>
    <source>
        <strain>JA-2-3B'a(2-13)</strain>
    </source>
</reference>
<name>ACKA_SYNJB</name>
<proteinExistence type="inferred from homology"/>
<organism>
    <name type="scientific">Synechococcus sp. (strain JA-2-3B'a(2-13))</name>
    <name type="common">Cyanobacteria bacterium Yellowstone B-Prime</name>
    <dbReference type="NCBI Taxonomy" id="321332"/>
    <lineage>
        <taxon>Bacteria</taxon>
        <taxon>Bacillati</taxon>
        <taxon>Cyanobacteriota</taxon>
        <taxon>Cyanophyceae</taxon>
        <taxon>Synechococcales</taxon>
        <taxon>Synechococcaceae</taxon>
        <taxon>Synechococcus</taxon>
    </lineage>
</organism>
<keyword id="KW-0067">ATP-binding</keyword>
<keyword id="KW-0963">Cytoplasm</keyword>
<keyword id="KW-0418">Kinase</keyword>
<keyword id="KW-0460">Magnesium</keyword>
<keyword id="KW-0479">Metal-binding</keyword>
<keyword id="KW-0547">Nucleotide-binding</keyword>
<keyword id="KW-1185">Reference proteome</keyword>
<keyword id="KW-0808">Transferase</keyword>
<comment type="function">
    <text evidence="1">Catalyzes the formation of acetyl phosphate from acetate and ATP. Can also catalyze the reverse reaction.</text>
</comment>
<comment type="catalytic activity">
    <reaction evidence="1">
        <text>acetate + ATP = acetyl phosphate + ADP</text>
        <dbReference type="Rhea" id="RHEA:11352"/>
        <dbReference type="ChEBI" id="CHEBI:22191"/>
        <dbReference type="ChEBI" id="CHEBI:30089"/>
        <dbReference type="ChEBI" id="CHEBI:30616"/>
        <dbReference type="ChEBI" id="CHEBI:456216"/>
        <dbReference type="EC" id="2.7.2.1"/>
    </reaction>
</comment>
<comment type="cofactor">
    <cofactor evidence="1">
        <name>Mg(2+)</name>
        <dbReference type="ChEBI" id="CHEBI:18420"/>
    </cofactor>
    <cofactor evidence="1">
        <name>Mn(2+)</name>
        <dbReference type="ChEBI" id="CHEBI:29035"/>
    </cofactor>
    <text evidence="1">Mg(2+). Can also accept Mn(2+).</text>
</comment>
<comment type="pathway">
    <text evidence="1">Metabolic intermediate biosynthesis; acetyl-CoA biosynthesis; acetyl-CoA from acetate: step 1/2.</text>
</comment>
<comment type="subunit">
    <text evidence="1">Homodimer.</text>
</comment>
<comment type="subcellular location">
    <subcellularLocation>
        <location evidence="1">Cytoplasm</location>
    </subcellularLocation>
</comment>
<comment type="similarity">
    <text evidence="1">Belongs to the acetokinase family.</text>
</comment>
<sequence length="403" mass="43216">MNILVVNAGSSSLKSSLFLTVEGRVEATPIWQAQVDFTYKPGEALIQTRRRGGGWEPFPSASPEGGIGQLAPLFQSLWQGEGSLLPQAAEIGGVGHRVVHGGSLYRQPTLITPEVERAIEQLIPLAPAHNPAALAGIRLLRQLLPGIPQVAVFDTAFHQQMPLAAALYPLPYAWAEQGIRRYGFHGINHEHCARRAAEILNRPLEELRLITCHLGNGCSLAAIRGGRSVDTTMGYTPLEGLMMGSRSGSVDPGILIHQLRQGMSVDELDRILNRESGLKGVSGLSSDMRVVLEAMEAGHARAELAFELFVHRLRSQIGAMLMSLDRLDALVFSGGIGENSAPVRAAACADLGFLGIQIDPVLNAGSPRNCDISTSDAPVRVLVISAQEDWAIATACQNLLQGE</sequence>